<keyword id="KW-0002">3D-structure</keyword>
<keyword id="KW-0391">Immunity</keyword>
<keyword id="KW-0399">Innate immunity</keyword>
<keyword id="KW-0479">Metal-binding</keyword>
<keyword id="KW-0611">Plant defense</keyword>
<keyword id="KW-1185">Reference proteome</keyword>
<keyword id="KW-0677">Repeat</keyword>
<keyword id="KW-0862">Zinc</keyword>
<name>RAR1_ARATH</name>
<gene>
    <name type="primary">RAR1</name>
    <name type="synonym">PBS2</name>
    <name type="synonym">RPR2</name>
    <name type="ordered locus">At5g51700</name>
    <name type="ORF">MIO24.17</name>
</gene>
<feature type="chain" id="PRO_0000403646" description="Cysteine and histidine-rich domain-containing protein RAR1">
    <location>
        <begin position="1"/>
        <end position="226"/>
    </location>
</feature>
<feature type="domain" description="CHORD 1" evidence="1">
    <location>
        <begin position="12"/>
        <end position="71"/>
    </location>
</feature>
<feature type="domain" description="CHORD 2" evidence="1">
    <location>
        <begin position="159"/>
        <end position="218"/>
    </location>
</feature>
<feature type="short sequence motif" description="CCCH">
    <location>
        <begin position="104"/>
        <end position="124"/>
    </location>
</feature>
<feature type="binding site" evidence="1">
    <location>
        <position position="12"/>
    </location>
    <ligand>
        <name>Zn(2+)</name>
        <dbReference type="ChEBI" id="CHEBI:29105"/>
        <label>1</label>
    </ligand>
</feature>
<feature type="binding site" evidence="1">
    <location>
        <position position="17"/>
    </location>
    <ligand>
        <name>Zn(2+)</name>
        <dbReference type="ChEBI" id="CHEBI:29105"/>
        <label>1</label>
    </ligand>
</feature>
<feature type="binding site" evidence="1">
    <location>
        <position position="31"/>
    </location>
    <ligand>
        <name>Zn(2+)</name>
        <dbReference type="ChEBI" id="CHEBI:29105"/>
        <label>1</label>
    </ligand>
</feature>
<feature type="binding site" evidence="1">
    <location>
        <position position="34"/>
    </location>
    <ligand>
        <name>Zn(2+)</name>
        <dbReference type="ChEBI" id="CHEBI:29105"/>
        <label>2</label>
    </ligand>
</feature>
<feature type="binding site" evidence="1">
    <location>
        <position position="49"/>
    </location>
    <ligand>
        <name>Zn(2+)</name>
        <dbReference type="ChEBI" id="CHEBI:29105"/>
        <label>2</label>
    </ligand>
</feature>
<feature type="binding site" evidence="1">
    <location>
        <position position="50"/>
    </location>
    <ligand>
        <name>Zn(2+)</name>
        <dbReference type="ChEBI" id="CHEBI:29105"/>
        <label>2</label>
    </ligand>
</feature>
<feature type="binding site" evidence="1">
    <location>
        <position position="66"/>
    </location>
    <ligand>
        <name>Zn(2+)</name>
        <dbReference type="ChEBI" id="CHEBI:29105"/>
        <label>2</label>
    </ligand>
</feature>
<feature type="binding site" evidence="1">
    <location>
        <position position="71"/>
    </location>
    <ligand>
        <name>Zn(2+)</name>
        <dbReference type="ChEBI" id="CHEBI:29105"/>
        <label>1</label>
    </ligand>
</feature>
<feature type="binding site" evidence="13 15">
    <location>
        <position position="159"/>
    </location>
    <ligand>
        <name>Zn(2+)</name>
        <dbReference type="ChEBI" id="CHEBI:29105"/>
        <label>3</label>
    </ligand>
</feature>
<feature type="binding site" evidence="13 15">
    <location>
        <position position="164"/>
    </location>
    <ligand>
        <name>Zn(2+)</name>
        <dbReference type="ChEBI" id="CHEBI:29105"/>
        <label>3</label>
    </ligand>
</feature>
<feature type="binding site" evidence="13 15">
    <location>
        <position position="178"/>
    </location>
    <ligand>
        <name>Zn(2+)</name>
        <dbReference type="ChEBI" id="CHEBI:29105"/>
        <label>3</label>
    </ligand>
</feature>
<feature type="binding site" evidence="13 15">
    <location>
        <position position="181"/>
    </location>
    <ligand>
        <name>Zn(2+)</name>
        <dbReference type="ChEBI" id="CHEBI:29105"/>
        <label>4</label>
    </ligand>
</feature>
<feature type="binding site" evidence="13 15">
    <location>
        <position position="196"/>
    </location>
    <ligand>
        <name>Zn(2+)</name>
        <dbReference type="ChEBI" id="CHEBI:29105"/>
        <label>4</label>
    </ligand>
</feature>
<feature type="binding site" evidence="13 15">
    <location>
        <position position="197"/>
    </location>
    <ligand>
        <name>Zn(2+)</name>
        <dbReference type="ChEBI" id="CHEBI:29105"/>
        <label>4</label>
    </ligand>
</feature>
<feature type="binding site" evidence="13 15">
    <location>
        <position position="213"/>
    </location>
    <ligand>
        <name>Zn(2+)</name>
        <dbReference type="ChEBI" id="CHEBI:29105"/>
        <label>4</label>
    </ligand>
</feature>
<feature type="binding site" evidence="13 15">
    <location>
        <position position="218"/>
    </location>
    <ligand>
        <name>Zn(2+)</name>
        <dbReference type="ChEBI" id="CHEBI:29105"/>
        <label>3</label>
    </ligand>
</feature>
<feature type="mutagenesis site" description="No effect on the interaction with SGT1A and barley HSP90." evidence="13">
    <original>R</original>
    <variation>D</variation>
    <location>
        <position position="14"/>
    </location>
</feature>
<feature type="mutagenesis site" description="Diminishes the interaction with barley HSP90. No effect on the interaction with SGT1A." evidence="13">
    <original>P</original>
    <variation>L</variation>
    <location>
        <position position="38"/>
    </location>
</feature>
<feature type="mutagenesis site" description="Diminishes the interaction with barley HSP90. No effect on the interaction with SGT1A." evidence="13">
    <original>K</original>
    <variation>E</variation>
    <location>
        <position position="45"/>
    </location>
</feature>
<feature type="mutagenesis site" description="Disrupts the interaction with SGT1A. No effect on the interaction with barley HSP90." evidence="13">
    <original>I</original>
    <variation>Q</variation>
    <location>
        <position position="153"/>
    </location>
</feature>
<feature type="mutagenesis site" description="Disrupts the interaction with SGT1A. No effect on the interaction with barley HSP90." evidence="13">
    <original>E</original>
    <variation>K</variation>
    <location>
        <position position="170"/>
    </location>
</feature>
<feature type="mutagenesis site" description="Disrupts the interaction with SGT1A. No effect on the interaction with barley HSP90." evidence="13">
    <original>W</original>
    <variation>T</variation>
    <location>
        <position position="217"/>
    </location>
</feature>
<feature type="strand" evidence="16">
    <location>
        <begin position="178"/>
        <end position="181"/>
    </location>
</feature>
<feature type="strand" evidence="16">
    <location>
        <begin position="185"/>
        <end position="188"/>
    </location>
</feature>
<feature type="strand" evidence="16">
    <location>
        <begin position="191"/>
        <end position="194"/>
    </location>
</feature>
<feature type="turn" evidence="16">
    <location>
        <begin position="195"/>
        <end position="198"/>
    </location>
</feature>
<feature type="helix" evidence="16">
    <location>
        <begin position="204"/>
        <end position="207"/>
    </location>
</feature>
<feature type="strand" evidence="16">
    <location>
        <begin position="214"/>
        <end position="216"/>
    </location>
</feature>
<comment type="function">
    <text evidence="3 4 5 7 8 9 11 12">Required specifically for plant innate immunity. Is essential for resistance conferred by multiple R genes recognizing different bacterial and oomycete pathogen isolates like avirulent P.syringae or H.parasitica (downy mildew). Contributes additively with SGT1B to RPP5-dependent resistance. Functions as a positive regulator of RPS5 accumulation by assisting its stabilization. May function as co-chaperone of HSP90-2 to positively regulate the steady-state accumulation of RPM1 and protect it from SGT1-mediated degradation. Acts as a negative regulator of pathogen-associated molecular pattern (PAMP)-triggered immunity.</text>
</comment>
<comment type="subunit">
    <text evidence="2 6 7 9 12 13">Interacts with HSP90-1, HSP90-2, SGT1A and SGT1B. Forms a ternary complex with SGT1A and barley HSP90.</text>
</comment>
<comment type="interaction">
    <interactant intactId="EBI-1781969">
        <id>Q9SE33</id>
    </interactant>
    <interactant intactId="EBI-1581364">
        <id>Q9SUT5</id>
        <label>SGT1B</label>
    </interactant>
    <organismsDiffer>false</organismsDiffer>
    <experiments>3</experiments>
</comment>
<comment type="interaction">
    <interactant intactId="EBI-1781969">
        <id>Q9SE33</id>
    </interactant>
    <interactant intactId="EBI-8081141">
        <id>Q0Q0I7</id>
        <label>HSP90-2</label>
    </interactant>
    <organismsDiffer>true</organismsDiffer>
    <experiments>4</experiments>
</comment>
<comment type="domain">
    <text evidence="10">The 2 cysteine and histidine-rich (CHORD) domains bind each 2 zinc ions, and the plant-specific 20 amino acid cysteine and histidine-containing motif (CCCH motif), located between the two CHORDs, binds 1 zinc ion.</text>
</comment>
<comment type="disruption phenotype">
    <text evidence="3 4 5 8">No visible phenotype under normal growth condition. In case of infection, plants loose R gene resistance mediated by RPP4, RPP5, RPS2, RPS4, RPS5 and RPM1.</text>
</comment>
<comment type="sequence caution" evidence="14">
    <conflict type="erroneous gene model prediction">
        <sequence resource="EMBL-CDS" id="BAB11239"/>
    </conflict>
</comment>
<organism>
    <name type="scientific">Arabidopsis thaliana</name>
    <name type="common">Mouse-ear cress</name>
    <dbReference type="NCBI Taxonomy" id="3702"/>
    <lineage>
        <taxon>Eukaryota</taxon>
        <taxon>Viridiplantae</taxon>
        <taxon>Streptophyta</taxon>
        <taxon>Embryophyta</taxon>
        <taxon>Tracheophyta</taxon>
        <taxon>Spermatophyta</taxon>
        <taxon>Magnoliopsida</taxon>
        <taxon>eudicotyledons</taxon>
        <taxon>Gunneridae</taxon>
        <taxon>Pentapetalae</taxon>
        <taxon>rosids</taxon>
        <taxon>malvids</taxon>
        <taxon>Brassicales</taxon>
        <taxon>Brassicaceae</taxon>
        <taxon>Camelineae</taxon>
        <taxon>Arabidopsis</taxon>
    </lineage>
</organism>
<sequence>MEVGSATKKLQCQRIGCNAMFTDDDNPQGSCQFHASGPFFHDGMKEWSCCKQRSHDFSLFLEIPGCKTGKHTTEKPVLAKSVPKHPVAAPTSSPDANAATKDSCSRCRQGFFCSDHGSQPKEQIKQTLNTPGQAEEEKIEPLAPPVQKAVIDINQPQVCKNKGCGQTFKERDNHETACSHHPGPAVFHDRLRGWKCCDVHVKEFDEFMEIPPCTKGWHSSSPDPAV</sequence>
<dbReference type="EMBL" id="AF192262">
    <property type="protein sequence ID" value="AAF18433.1"/>
    <property type="molecule type" value="mRNA"/>
</dbReference>
<dbReference type="EMBL" id="AB010074">
    <property type="protein sequence ID" value="BAB11239.1"/>
    <property type="status" value="ALT_SEQ"/>
    <property type="molecule type" value="Genomic_DNA"/>
</dbReference>
<dbReference type="EMBL" id="CP002688">
    <property type="protein sequence ID" value="AED96116.1"/>
    <property type="molecule type" value="Genomic_DNA"/>
</dbReference>
<dbReference type="EMBL" id="AY088919">
    <property type="protein sequence ID" value="AAM67225.1"/>
    <property type="molecule type" value="mRNA"/>
</dbReference>
<dbReference type="RefSeq" id="NP_568762.6">
    <property type="nucleotide sequence ID" value="NM_124549.8"/>
</dbReference>
<dbReference type="PDB" id="2XCM">
    <property type="method" value="X-ray"/>
    <property type="resolution" value="2.20 A"/>
    <property type="chains" value="E/F=149-221"/>
</dbReference>
<dbReference type="PDBsum" id="2XCM"/>
<dbReference type="SMR" id="Q9SE33"/>
<dbReference type="BioGRID" id="20489">
    <property type="interactions" value="6"/>
</dbReference>
<dbReference type="DIP" id="DIP-41228N"/>
<dbReference type="FunCoup" id="Q9SE33">
    <property type="interactions" value="3425"/>
</dbReference>
<dbReference type="IntAct" id="Q9SE33">
    <property type="interactions" value="6"/>
</dbReference>
<dbReference type="MINT" id="Q9SE33"/>
<dbReference type="STRING" id="3702.Q9SE33"/>
<dbReference type="iPTMnet" id="Q9SE33"/>
<dbReference type="PaxDb" id="3702-AT5G51700.1"/>
<dbReference type="ProteomicsDB" id="236614"/>
<dbReference type="EnsemblPlants" id="AT5G51700.1">
    <property type="protein sequence ID" value="AT5G51700.1"/>
    <property type="gene ID" value="AT5G51700"/>
</dbReference>
<dbReference type="GeneID" id="835244"/>
<dbReference type="Gramene" id="AT5G51700.1">
    <property type="protein sequence ID" value="AT5G51700.1"/>
    <property type="gene ID" value="AT5G51700"/>
</dbReference>
<dbReference type="KEGG" id="ath:AT5G51700"/>
<dbReference type="Araport" id="AT5G51700"/>
<dbReference type="TAIR" id="AT5G51700">
    <property type="gene designation" value="PBS2"/>
</dbReference>
<dbReference type="eggNOG" id="KOG1667">
    <property type="taxonomic scope" value="Eukaryota"/>
</dbReference>
<dbReference type="HOGENOM" id="CLU_040079_2_0_1"/>
<dbReference type="InParanoid" id="Q9SE33"/>
<dbReference type="OMA" id="PEGSCTY"/>
<dbReference type="OrthoDB" id="10261079at2759"/>
<dbReference type="PhylomeDB" id="Q9SE33"/>
<dbReference type="EvolutionaryTrace" id="Q9SE33"/>
<dbReference type="PRO" id="PR:Q9SE33"/>
<dbReference type="Proteomes" id="UP000006548">
    <property type="component" value="Chromosome 5"/>
</dbReference>
<dbReference type="ExpressionAtlas" id="Q9SE33">
    <property type="expression patterns" value="baseline and differential"/>
</dbReference>
<dbReference type="GO" id="GO:0051879">
    <property type="term" value="F:Hsp90 protein binding"/>
    <property type="evidence" value="ECO:0000353"/>
    <property type="project" value="UniProtKB"/>
</dbReference>
<dbReference type="GO" id="GO:0008270">
    <property type="term" value="F:zinc ion binding"/>
    <property type="evidence" value="ECO:0000314"/>
    <property type="project" value="UniProtKB"/>
</dbReference>
<dbReference type="GO" id="GO:0042742">
    <property type="term" value="P:defense response to bacterium"/>
    <property type="evidence" value="ECO:0000315"/>
    <property type="project" value="UniProtKB"/>
</dbReference>
<dbReference type="GO" id="GO:0050832">
    <property type="term" value="P:defense response to fungus"/>
    <property type="evidence" value="ECO:0000315"/>
    <property type="project" value="UniProtKB"/>
</dbReference>
<dbReference type="GO" id="GO:0009626">
    <property type="term" value="P:plant-type hypersensitive response"/>
    <property type="evidence" value="ECO:0000315"/>
    <property type="project" value="UniProtKB"/>
</dbReference>
<dbReference type="GO" id="GO:0050821">
    <property type="term" value="P:protein stabilization"/>
    <property type="evidence" value="ECO:0000315"/>
    <property type="project" value="TAIR"/>
</dbReference>
<dbReference type="GO" id="GO:0002679">
    <property type="term" value="P:respiratory burst involved in defense response"/>
    <property type="evidence" value="ECO:0000315"/>
    <property type="project" value="UniProtKB"/>
</dbReference>
<dbReference type="FunFam" id="4.10.1130.20:FF:000003">
    <property type="entry name" value="Cysteine and histidine-rich domain-containing protein RAR1"/>
    <property type="match status" value="1"/>
</dbReference>
<dbReference type="FunFam" id="4.10.1130.20:FF:000005">
    <property type="entry name" value="Cysteine and histidine-rich domain-containing protein RAR1"/>
    <property type="match status" value="1"/>
</dbReference>
<dbReference type="Gene3D" id="4.10.1130.20">
    <property type="match status" value="2"/>
</dbReference>
<dbReference type="InterPro" id="IPR007051">
    <property type="entry name" value="CHORD_dom"/>
</dbReference>
<dbReference type="InterPro" id="IPR043316">
    <property type="entry name" value="RAR1"/>
</dbReference>
<dbReference type="PANTHER" id="PTHR47895">
    <property type="entry name" value="CYSTEINE AND HISTIDINE-RICH DOMAIN-CONTAINING PROTEIN RAR1"/>
    <property type="match status" value="1"/>
</dbReference>
<dbReference type="PANTHER" id="PTHR47895:SF2">
    <property type="entry name" value="CYSTEINE AND HISTIDINE-RICH DOMAIN-CONTAINING PROTEIN RAR1"/>
    <property type="match status" value="1"/>
</dbReference>
<dbReference type="Pfam" id="PF04968">
    <property type="entry name" value="CHORD"/>
    <property type="match status" value="2"/>
</dbReference>
<dbReference type="PROSITE" id="PS51401">
    <property type="entry name" value="CHORD"/>
    <property type="match status" value="2"/>
</dbReference>
<protein>
    <recommendedName>
        <fullName>Cysteine and histidine-rich domain-containing protein RAR1</fullName>
    </recommendedName>
    <alternativeName>
        <fullName>AtRAR1</fullName>
    </alternativeName>
    <alternativeName>
        <fullName>CHORD domain-containing protein RAR1</fullName>
    </alternativeName>
    <alternativeName>
        <fullName>Protein PPHB SUSCEPTIBLE 2</fullName>
    </alternativeName>
    <alternativeName>
        <fullName>Protein REQUIRED FOR MLA12 RESISTANCE 1</fullName>
    </alternativeName>
</protein>
<evidence type="ECO:0000255" key="1">
    <source>
        <dbReference type="PROSITE-ProRule" id="PRU00734"/>
    </source>
</evidence>
<evidence type="ECO:0000269" key="2">
    <source>
    </source>
</evidence>
<evidence type="ECO:0000269" key="3">
    <source>
    </source>
</evidence>
<evidence type="ECO:0000269" key="4">
    <source>
    </source>
</evidence>
<evidence type="ECO:0000269" key="5">
    <source>
    </source>
</evidence>
<evidence type="ECO:0000269" key="6">
    <source>
    </source>
</evidence>
<evidence type="ECO:0000269" key="7">
    <source>
    </source>
</evidence>
<evidence type="ECO:0000269" key="8">
    <source>
    </source>
</evidence>
<evidence type="ECO:0000269" key="9">
    <source>
    </source>
</evidence>
<evidence type="ECO:0000269" key="10">
    <source>
    </source>
</evidence>
<evidence type="ECO:0000269" key="11">
    <source>
    </source>
</evidence>
<evidence type="ECO:0000269" key="12">
    <source>
    </source>
</evidence>
<evidence type="ECO:0000269" key="13">
    <source>
    </source>
</evidence>
<evidence type="ECO:0000305" key="14"/>
<evidence type="ECO:0007744" key="15">
    <source>
        <dbReference type="PDB" id="2XCM"/>
    </source>
</evidence>
<evidence type="ECO:0007829" key="16">
    <source>
        <dbReference type="PDB" id="2XCM"/>
    </source>
</evidence>
<reference key="1">
    <citation type="journal article" date="1999" name="Cell">
        <title>A novel class of eukaryotic zinc-binding proteins is required for disease resistance signaling in barley and development in C. elegans.</title>
        <authorList>
            <person name="Shirasu K."/>
            <person name="Lahaye T."/>
            <person name="Tan M.-W."/>
            <person name="Zhou F."/>
            <person name="Azevedo C."/>
            <person name="Schulze-Lefert P."/>
        </authorList>
    </citation>
    <scope>NUCLEOTIDE SEQUENCE [MRNA]</scope>
    <source>
        <strain>cv. Columbia</strain>
    </source>
</reference>
<reference key="2">
    <citation type="journal article" date="1998" name="DNA Res.">
        <title>Structural analysis of Arabidopsis thaliana chromosome 5. IV. Sequence features of the regions of 1,456,315 bp covered by nineteen physically assigned P1 and TAC clones.</title>
        <authorList>
            <person name="Sato S."/>
            <person name="Kaneko T."/>
            <person name="Kotani H."/>
            <person name="Nakamura Y."/>
            <person name="Asamizu E."/>
            <person name="Miyajima N."/>
            <person name="Tabata S."/>
        </authorList>
    </citation>
    <scope>NUCLEOTIDE SEQUENCE [LARGE SCALE GENOMIC DNA]</scope>
    <source>
        <strain>cv. Columbia</strain>
    </source>
</reference>
<reference key="3">
    <citation type="journal article" date="2017" name="Plant J.">
        <title>Araport11: a complete reannotation of the Arabidopsis thaliana reference genome.</title>
        <authorList>
            <person name="Cheng C.Y."/>
            <person name="Krishnakumar V."/>
            <person name="Chan A.P."/>
            <person name="Thibaud-Nissen F."/>
            <person name="Schobel S."/>
            <person name="Town C.D."/>
        </authorList>
    </citation>
    <scope>GENOME REANNOTATION</scope>
    <source>
        <strain>cv. Columbia</strain>
    </source>
</reference>
<reference key="4">
    <citation type="submission" date="2002-03" db="EMBL/GenBank/DDBJ databases">
        <title>Full-length cDNA from Arabidopsis thaliana.</title>
        <authorList>
            <person name="Brover V.V."/>
            <person name="Troukhan M.E."/>
            <person name="Alexandrov N.A."/>
            <person name="Lu Y.-P."/>
            <person name="Flavell R.B."/>
            <person name="Feldmann K.A."/>
        </authorList>
    </citation>
    <scope>NUCLEOTIDE SEQUENCE [LARGE SCALE MRNA]</scope>
</reference>
<reference key="5">
    <citation type="journal article" date="2002" name="Plant Cell">
        <title>Arabidopsis RAR1 exerts rate-limiting control of R gene-mediated defenses against multiple pathogens.</title>
        <authorList>
            <person name="Muskett P.R."/>
            <person name="Kahn K."/>
            <person name="Austin M.J."/>
            <person name="Moisan L.J."/>
            <person name="Sadanandom A."/>
            <person name="Shirasu K."/>
            <person name="Jones J.D."/>
            <person name="Parker J.E."/>
        </authorList>
    </citation>
    <scope>FUNCTION</scope>
    <scope>DISRUPTION PHENOTYPE</scope>
    <source>
        <strain>cv. Columbia</strain>
        <strain>cv. Landsberg erecta</strain>
    </source>
</reference>
<reference key="6">
    <citation type="journal article" date="2002" name="Plant Cell">
        <title>RAR1 and NDR1 contribute quantitatively to disease resistance in Arabidopsis, and their relative contributions are dependent on the R gene assayed.</title>
        <authorList>
            <person name="Tornero P."/>
            <person name="Merritt P."/>
            <person name="Sadanandom A."/>
            <person name="Shirasu K."/>
            <person name="Innes R.W."/>
            <person name="Dangl J.L."/>
        </authorList>
    </citation>
    <scope>FUNCTION</scope>
    <scope>DISRUPTION PHENOTYPE</scope>
    <source>
        <strain>cv. Columbia</strain>
    </source>
</reference>
<reference key="7">
    <citation type="journal article" date="2002" name="Science">
        <title>The RAR1 interactor SGT1, an essential component of R gene-triggered disease resistance.</title>
        <authorList>
            <person name="Azevedo C."/>
            <person name="Sadanandom A."/>
            <person name="Kitagawa K."/>
            <person name="Freialdenhoven A."/>
            <person name="Shirasu K."/>
            <person name="Schulze-Lefert P."/>
        </authorList>
    </citation>
    <scope>INTERACTION WITH SGT1A AND SGT1B</scope>
</reference>
<reference key="8">
    <citation type="journal article" date="2002" name="Science">
        <title>Regulatory role of SGT1 in early R gene-mediated plant defenses.</title>
        <authorList>
            <person name="Austin M.J."/>
            <person name="Muskett P."/>
            <person name="Kahn K."/>
            <person name="Feys B.J."/>
            <person name="Jones J.D."/>
            <person name="Parker J.E."/>
        </authorList>
    </citation>
    <scope>FUNCTION</scope>
    <scope>DISRUPTION PHENOTYPE</scope>
    <source>
        <strain>cv. Columbia</strain>
        <strain>cv. Landsberg erecta</strain>
    </source>
</reference>
<reference key="9">
    <citation type="journal article" date="2003" name="EMBO J.">
        <title>Cytosolic HSP90 associates with and modulates the Arabidopsis RPM1 disease resistance protein.</title>
        <authorList>
            <person name="Hubert D.A."/>
            <person name="Tornero P."/>
            <person name="Belkhadir Y."/>
            <person name="Krishna P."/>
            <person name="Takahashi A."/>
            <person name="Shirasu K."/>
            <person name="Dangl J.L."/>
        </authorList>
    </citation>
    <scope>FUNCTION</scope>
    <scope>INTERACTION WITH HSP90-2</scope>
</reference>
<reference key="10">
    <citation type="journal article" date="2003" name="Proc. Natl. Acad. Sci. U.S.A.">
        <title>HSP90 interacts with RAR1 and SGT1 and is essential for RPS2-mediated disease resistance in Arabidopsis.</title>
        <authorList>
            <person name="Takahashi A."/>
            <person name="Casais C."/>
            <person name="Ichimura K."/>
            <person name="Shirasu K."/>
        </authorList>
    </citation>
    <scope>INTERACTION WITH HSP90-1</scope>
</reference>
<reference key="11">
    <citation type="journal article" date="2005" name="Science">
        <title>Antagonistic control of disease resistance protein stability in the plant immune system.</title>
        <authorList>
            <person name="Holt B.F. III"/>
            <person name="Belkhadir Y."/>
            <person name="Dangl J.L."/>
        </authorList>
    </citation>
    <scope>FUNCTION</scope>
    <scope>DISRUPTION PHENOTYPE</scope>
</reference>
<reference key="12">
    <citation type="journal article" date="2006" name="Proc. Natl. Acad. Sci. U.S.A.">
        <title>RAR1, a central player in plant immunity, is targeted by Pseudomonas syringae effector AvrB.</title>
        <authorList>
            <person name="Shang Y."/>
            <person name="Li X."/>
            <person name="Cui H."/>
            <person name="He P."/>
            <person name="Thilmony R."/>
            <person name="Chintamanani S."/>
            <person name="Zwiesler-Vollick J."/>
            <person name="Gopalan S."/>
            <person name="Tang X."/>
            <person name="Zhou J.M."/>
        </authorList>
    </citation>
    <scope>FUNCTION</scope>
    <scope>INTERACTION WITH SGT1B AND HSP90-1</scope>
</reference>
<reference key="13">
    <citation type="journal article" date="2007" name="Biochemistry">
        <title>Biochemical characterization of RAR1 cysteine- and histidine-rich domains (CHORDs): a novel class of zinc-dependent protein-protein interaction modules.</title>
        <authorList>
            <person name="Heise C.T."/>
            <person name="Le Duff C.S."/>
            <person name="Boter M."/>
            <person name="Casais C."/>
            <person name="Airey J.E."/>
            <person name="Leech A.P."/>
            <person name="Amigues B."/>
            <person name="Guerois R."/>
            <person name="Moore G.R."/>
            <person name="Shirasu K."/>
            <person name="Kleanthous C."/>
        </authorList>
    </citation>
    <scope>DOMAIN</scope>
</reference>
<reference key="14">
    <citation type="journal article" date="2009" name="Plant Cell Physiol.">
        <title>Enhanced defense responses in Arabidopsis induced by the cell wall protein fractions from Pythium oligandrum require SGT1, RAR1, NPR1 and JAR1.</title>
        <authorList>
            <person name="Kawamura Y."/>
            <person name="Takenaka S."/>
            <person name="Hase S."/>
            <person name="Kubota M."/>
            <person name="Ichinose Y."/>
            <person name="Kanayama Y."/>
            <person name="Nakaho K."/>
            <person name="Klessig D.F."/>
            <person name="Takahashi H."/>
        </authorList>
    </citation>
    <scope>FUNCTION</scope>
</reference>
<reference key="15">
    <citation type="journal article" date="2009" name="Proc. Natl. Acad. Sci. U.S.A.">
        <title>Specific Arabidopsis HSP90.2 alleles recapitulate RAR1 cochaperone function in plant NB-LRR disease resistance protein regulation.</title>
        <authorList>
            <person name="Hubert D.A."/>
            <person name="He Y."/>
            <person name="McNulty B.C."/>
            <person name="Tornero P."/>
            <person name="Dangl J.L."/>
        </authorList>
    </citation>
    <scope>FUNCTION</scope>
    <scope>INTERACTION WITH HSP90-2</scope>
</reference>
<reference key="16">
    <citation type="journal article" date="2010" name="Mol. Cell">
        <title>Structural basis for assembly of Hsp90-Sgt1-CHORD protein complexes: implications for chaperoning of NLR innate immunity receptors.</title>
        <authorList>
            <person name="Zhang M."/>
            <person name="Kadota Y."/>
            <person name="Prodromou C."/>
            <person name="Shirasu K."/>
            <person name="Pearl L.H."/>
        </authorList>
    </citation>
    <scope>X-RAY CRYSTALLOGRAPHY (2.20 ANGSTROMS) OF 149-221 IN COMPLEX WITH SGT1A; BARLEY HSP90 AND ZINC IONS</scope>
    <scope>SUBUNIT</scope>
    <scope>MUTAGENESIS OF ARG-14; PRO-38; LYS-45; ILE-153; GLU-170 AND TRP-217</scope>
</reference>
<proteinExistence type="evidence at protein level"/>
<accession>Q9SE33</accession>
<accession>Q9FLI9</accession>